<keyword id="KW-0963">Cytoplasm</keyword>
<keyword id="KW-0227">DNA damage</keyword>
<keyword id="KW-0228">DNA excision</keyword>
<keyword id="KW-0234">DNA repair</keyword>
<keyword id="KW-0267">Excision nuclease</keyword>
<keyword id="KW-0742">SOS response</keyword>
<proteinExistence type="inferred from homology"/>
<accession>A8FG01</accession>
<reference key="1">
    <citation type="journal article" date="2007" name="PLoS ONE">
        <title>Paradoxical DNA repair and peroxide resistance gene conservation in Bacillus pumilus SAFR-032.</title>
        <authorList>
            <person name="Gioia J."/>
            <person name="Yerrapragada S."/>
            <person name="Qin X."/>
            <person name="Jiang H."/>
            <person name="Igboeli O.C."/>
            <person name="Muzny D."/>
            <person name="Dugan-Rocha S."/>
            <person name="Ding Y."/>
            <person name="Hawes A."/>
            <person name="Liu W."/>
            <person name="Perez L."/>
            <person name="Kovar C."/>
            <person name="Dinh H."/>
            <person name="Lee S."/>
            <person name="Nazareth L."/>
            <person name="Blyth P."/>
            <person name="Holder M."/>
            <person name="Buhay C."/>
            <person name="Tirumalai M.R."/>
            <person name="Liu Y."/>
            <person name="Dasgupta I."/>
            <person name="Bokhetache L."/>
            <person name="Fujita M."/>
            <person name="Karouia F."/>
            <person name="Eswara Moorthy P."/>
            <person name="Siefert J."/>
            <person name="Uzman A."/>
            <person name="Buzumbo P."/>
            <person name="Verma A."/>
            <person name="Zwiya H."/>
            <person name="McWilliams B.D."/>
            <person name="Olowu A."/>
            <person name="Clinkenbeard K.D."/>
            <person name="Newcombe D."/>
            <person name="Golebiewski L."/>
            <person name="Petrosino J.F."/>
            <person name="Nicholson W.L."/>
            <person name="Fox G.E."/>
            <person name="Venkateswaran K."/>
            <person name="Highlander S.K."/>
            <person name="Weinstock G.M."/>
        </authorList>
    </citation>
    <scope>NUCLEOTIDE SEQUENCE [LARGE SCALE GENOMIC DNA]</scope>
    <source>
        <strain>SAFR-032</strain>
    </source>
</reference>
<protein>
    <recommendedName>
        <fullName evidence="1">UvrABC system protein C</fullName>
        <shortName evidence="1">Protein UvrC</shortName>
    </recommendedName>
    <alternativeName>
        <fullName evidence="1">Excinuclease ABC subunit C</fullName>
    </alternativeName>
</protein>
<organism>
    <name type="scientific">Bacillus pumilus (strain SAFR-032)</name>
    <dbReference type="NCBI Taxonomy" id="315750"/>
    <lineage>
        <taxon>Bacteria</taxon>
        <taxon>Bacillati</taxon>
        <taxon>Bacillota</taxon>
        <taxon>Bacilli</taxon>
        <taxon>Bacillales</taxon>
        <taxon>Bacillaceae</taxon>
        <taxon>Bacillus</taxon>
    </lineage>
</organism>
<comment type="function">
    <text evidence="1">The UvrABC repair system catalyzes the recognition and processing of DNA lesions. UvrC both incises the 5' and 3' sides of the lesion. The N-terminal half is responsible for the 3' incision and the C-terminal half is responsible for the 5' incision.</text>
</comment>
<comment type="subunit">
    <text evidence="1">Interacts with UvrB in an incision complex.</text>
</comment>
<comment type="subcellular location">
    <subcellularLocation>
        <location evidence="1">Cytoplasm</location>
    </subcellularLocation>
</comment>
<comment type="similarity">
    <text evidence="1">Belongs to the UvrC family.</text>
</comment>
<sequence length="590" mass="68452">MNKLIKEKLSVLPDQPGCYLMKDRQNTVIYVGKAKILKNRVRSYFTGSHDAKTQRLVSEIEDFEYIVTSSNIEALILELNLIKKYDPKYNVMLKDDKTYPFIKITNERHPKLIVTRHVKKDKGKYFGPYPNVQAARETKKLLDRLYPLRKCATLPDRVCLYYHLGQCLAPCVYDISEETNKQLVDEIIRFLNGGHQQIKKELTEKMQEAAEQLEFERAKELRDQIAYIDSTMEKQKMTMSDLSDRDVFAYAYDKGWMCVQVFFIRQGKLIERDVSLFPMYQDPEEEFLTFMGQFYSKNNHFLPKEILVPDSVDQEMIEQLLETNVHQPKKGKKKDLLLLAHQNAKIALKEKFSLIERDEERSIGAVKQLGDALNIYMPYRIEAFDNSNIQGADPVSAMVVFQDGKPYKKEYRKYKIKTVTGPDDYASMREVIRRRYTRVLKDELPLPDLILIDGGKGQINAAIDVLENELNLSVPVAGLVKDEKHRTSNLMMGDTLEIVALERNSQAFYLLQRIQDEVHRFAISFHRQLRGKNAFQSILDDVPGIGEKRKKQLLKHFGSVKKMKEATIEDFQEAGIPKQTAELLIEALKK</sequence>
<gene>
    <name evidence="1" type="primary">uvrC</name>
    <name type="ordered locus">BPUM_2506</name>
</gene>
<feature type="chain" id="PRO_1000077756" description="UvrABC system protein C">
    <location>
        <begin position="1"/>
        <end position="590"/>
    </location>
</feature>
<feature type="domain" description="GIY-YIG" evidence="1">
    <location>
        <begin position="14"/>
        <end position="91"/>
    </location>
</feature>
<feature type="domain" description="UVR" evidence="1">
    <location>
        <begin position="196"/>
        <end position="231"/>
    </location>
</feature>
<name>UVRC_BACP2</name>
<dbReference type="EMBL" id="CP000813">
    <property type="protein sequence ID" value="ABV63168.1"/>
    <property type="molecule type" value="Genomic_DNA"/>
</dbReference>
<dbReference type="RefSeq" id="WP_012010820.1">
    <property type="nucleotide sequence ID" value="NC_009848.4"/>
</dbReference>
<dbReference type="SMR" id="A8FG01"/>
<dbReference type="STRING" id="315750.BPUM_2506"/>
<dbReference type="GeneID" id="5621771"/>
<dbReference type="KEGG" id="bpu:BPUM_2506"/>
<dbReference type="eggNOG" id="COG0322">
    <property type="taxonomic scope" value="Bacteria"/>
</dbReference>
<dbReference type="HOGENOM" id="CLU_014841_3_2_9"/>
<dbReference type="OrthoDB" id="9804933at2"/>
<dbReference type="Proteomes" id="UP000001355">
    <property type="component" value="Chromosome"/>
</dbReference>
<dbReference type="GO" id="GO:0005737">
    <property type="term" value="C:cytoplasm"/>
    <property type="evidence" value="ECO:0007669"/>
    <property type="project" value="UniProtKB-SubCell"/>
</dbReference>
<dbReference type="GO" id="GO:0009380">
    <property type="term" value="C:excinuclease repair complex"/>
    <property type="evidence" value="ECO:0007669"/>
    <property type="project" value="InterPro"/>
</dbReference>
<dbReference type="GO" id="GO:0003677">
    <property type="term" value="F:DNA binding"/>
    <property type="evidence" value="ECO:0007669"/>
    <property type="project" value="UniProtKB-UniRule"/>
</dbReference>
<dbReference type="GO" id="GO:0009381">
    <property type="term" value="F:excinuclease ABC activity"/>
    <property type="evidence" value="ECO:0007669"/>
    <property type="project" value="UniProtKB-UniRule"/>
</dbReference>
<dbReference type="GO" id="GO:0006289">
    <property type="term" value="P:nucleotide-excision repair"/>
    <property type="evidence" value="ECO:0007669"/>
    <property type="project" value="UniProtKB-UniRule"/>
</dbReference>
<dbReference type="GO" id="GO:0009432">
    <property type="term" value="P:SOS response"/>
    <property type="evidence" value="ECO:0007669"/>
    <property type="project" value="UniProtKB-UniRule"/>
</dbReference>
<dbReference type="CDD" id="cd10434">
    <property type="entry name" value="GIY-YIG_UvrC_Cho"/>
    <property type="match status" value="1"/>
</dbReference>
<dbReference type="FunFam" id="3.30.420.340:FF:000002">
    <property type="entry name" value="UvrABC system protein C"/>
    <property type="match status" value="1"/>
</dbReference>
<dbReference type="FunFam" id="3.40.1440.10:FF:000001">
    <property type="entry name" value="UvrABC system protein C"/>
    <property type="match status" value="1"/>
</dbReference>
<dbReference type="Gene3D" id="1.10.150.20">
    <property type="entry name" value="5' to 3' exonuclease, C-terminal subdomain"/>
    <property type="match status" value="1"/>
</dbReference>
<dbReference type="Gene3D" id="3.40.1440.10">
    <property type="entry name" value="GIY-YIG endonuclease"/>
    <property type="match status" value="1"/>
</dbReference>
<dbReference type="Gene3D" id="4.10.860.10">
    <property type="entry name" value="UVR domain"/>
    <property type="match status" value="1"/>
</dbReference>
<dbReference type="Gene3D" id="3.30.420.340">
    <property type="entry name" value="UvrC, RNAse H endonuclease domain"/>
    <property type="match status" value="1"/>
</dbReference>
<dbReference type="HAMAP" id="MF_00203">
    <property type="entry name" value="UvrC"/>
    <property type="match status" value="1"/>
</dbReference>
<dbReference type="InterPro" id="IPR000305">
    <property type="entry name" value="GIY-YIG_endonuc"/>
</dbReference>
<dbReference type="InterPro" id="IPR035901">
    <property type="entry name" value="GIY-YIG_endonuc_sf"/>
</dbReference>
<dbReference type="InterPro" id="IPR047296">
    <property type="entry name" value="GIY-YIG_UvrC_Cho"/>
</dbReference>
<dbReference type="InterPro" id="IPR010994">
    <property type="entry name" value="RuvA_2-like"/>
</dbReference>
<dbReference type="InterPro" id="IPR001943">
    <property type="entry name" value="UVR_dom"/>
</dbReference>
<dbReference type="InterPro" id="IPR036876">
    <property type="entry name" value="UVR_dom_sf"/>
</dbReference>
<dbReference type="InterPro" id="IPR050066">
    <property type="entry name" value="UvrABC_protein_C"/>
</dbReference>
<dbReference type="InterPro" id="IPR004791">
    <property type="entry name" value="UvrC"/>
</dbReference>
<dbReference type="InterPro" id="IPR001162">
    <property type="entry name" value="UvrC_RNase_H_dom"/>
</dbReference>
<dbReference type="InterPro" id="IPR038476">
    <property type="entry name" value="UvrC_RNase_H_dom_sf"/>
</dbReference>
<dbReference type="NCBIfam" id="NF001824">
    <property type="entry name" value="PRK00558.1-5"/>
    <property type="match status" value="1"/>
</dbReference>
<dbReference type="NCBIfam" id="TIGR00194">
    <property type="entry name" value="uvrC"/>
    <property type="match status" value="1"/>
</dbReference>
<dbReference type="PANTHER" id="PTHR30562:SF1">
    <property type="entry name" value="UVRABC SYSTEM PROTEIN C"/>
    <property type="match status" value="1"/>
</dbReference>
<dbReference type="PANTHER" id="PTHR30562">
    <property type="entry name" value="UVRC/OXIDOREDUCTASE"/>
    <property type="match status" value="1"/>
</dbReference>
<dbReference type="Pfam" id="PF01541">
    <property type="entry name" value="GIY-YIG"/>
    <property type="match status" value="1"/>
</dbReference>
<dbReference type="Pfam" id="PF14520">
    <property type="entry name" value="HHH_5"/>
    <property type="match status" value="1"/>
</dbReference>
<dbReference type="Pfam" id="PF02151">
    <property type="entry name" value="UVR"/>
    <property type="match status" value="1"/>
</dbReference>
<dbReference type="Pfam" id="PF22920">
    <property type="entry name" value="UvrC_RNaseH"/>
    <property type="match status" value="1"/>
</dbReference>
<dbReference type="Pfam" id="PF08459">
    <property type="entry name" value="UvrC_RNaseH_dom"/>
    <property type="match status" value="1"/>
</dbReference>
<dbReference type="SMART" id="SM00465">
    <property type="entry name" value="GIYc"/>
    <property type="match status" value="1"/>
</dbReference>
<dbReference type="SUPFAM" id="SSF46600">
    <property type="entry name" value="C-terminal UvrC-binding domain of UvrB"/>
    <property type="match status" value="1"/>
</dbReference>
<dbReference type="SUPFAM" id="SSF82771">
    <property type="entry name" value="GIY-YIG endonuclease"/>
    <property type="match status" value="1"/>
</dbReference>
<dbReference type="SUPFAM" id="SSF47781">
    <property type="entry name" value="RuvA domain 2-like"/>
    <property type="match status" value="1"/>
</dbReference>
<dbReference type="PROSITE" id="PS50164">
    <property type="entry name" value="GIY_YIG"/>
    <property type="match status" value="1"/>
</dbReference>
<dbReference type="PROSITE" id="PS50151">
    <property type="entry name" value="UVR"/>
    <property type="match status" value="1"/>
</dbReference>
<dbReference type="PROSITE" id="PS50165">
    <property type="entry name" value="UVRC"/>
    <property type="match status" value="1"/>
</dbReference>
<evidence type="ECO:0000255" key="1">
    <source>
        <dbReference type="HAMAP-Rule" id="MF_00203"/>
    </source>
</evidence>